<protein>
    <recommendedName>
        <fullName evidence="1">tRNA pseudouridine synthase B</fullName>
        <ecNumber evidence="1">5.4.99.25</ecNumber>
    </recommendedName>
    <alternativeName>
        <fullName evidence="1">tRNA pseudouridine(55) synthase</fullName>
        <shortName evidence="1">Psi55 synthase</shortName>
    </alternativeName>
    <alternativeName>
        <fullName evidence="1">tRNA pseudouridylate synthase</fullName>
    </alternativeName>
    <alternativeName>
        <fullName evidence="1">tRNA-uridine isomerase</fullName>
    </alternativeName>
</protein>
<feature type="chain" id="PRO_0000121811" description="tRNA pseudouridine synthase B">
    <location>
        <begin position="1"/>
        <end position="272"/>
    </location>
</feature>
<feature type="active site" description="Nucleophile" evidence="1">
    <location>
        <position position="38"/>
    </location>
</feature>
<evidence type="ECO:0000255" key="1">
    <source>
        <dbReference type="HAMAP-Rule" id="MF_01080"/>
    </source>
</evidence>
<dbReference type="EC" id="5.4.99.25" evidence="1"/>
<dbReference type="EMBL" id="AL111168">
    <property type="protein sequence ID" value="CAL35219.1"/>
    <property type="molecule type" value="Genomic_DNA"/>
</dbReference>
<dbReference type="PIR" id="A81314">
    <property type="entry name" value="A81314"/>
</dbReference>
<dbReference type="RefSeq" id="WP_010891909.1">
    <property type="nucleotide sequence ID" value="NZ_SZUC01000001.1"/>
</dbReference>
<dbReference type="RefSeq" id="YP_002344495.1">
    <property type="nucleotide sequence ID" value="NC_002163.1"/>
</dbReference>
<dbReference type="SMR" id="Q9PNJ2"/>
<dbReference type="IntAct" id="Q9PNJ2">
    <property type="interactions" value="7"/>
</dbReference>
<dbReference type="STRING" id="192222.Cj1102"/>
<dbReference type="PaxDb" id="192222-Cj1102"/>
<dbReference type="EnsemblBacteria" id="CAL35219">
    <property type="protein sequence ID" value="CAL35219"/>
    <property type="gene ID" value="Cj1102"/>
</dbReference>
<dbReference type="GeneID" id="905393"/>
<dbReference type="KEGG" id="cje:Cj1102"/>
<dbReference type="PATRIC" id="fig|192222.6.peg.1084"/>
<dbReference type="eggNOG" id="COG0130">
    <property type="taxonomic scope" value="Bacteria"/>
</dbReference>
<dbReference type="HOGENOM" id="CLU_032087_2_0_7"/>
<dbReference type="OrthoDB" id="9802309at2"/>
<dbReference type="Proteomes" id="UP000000799">
    <property type="component" value="Chromosome"/>
</dbReference>
<dbReference type="GO" id="GO:0003723">
    <property type="term" value="F:RNA binding"/>
    <property type="evidence" value="ECO:0007669"/>
    <property type="project" value="InterPro"/>
</dbReference>
<dbReference type="GO" id="GO:0160148">
    <property type="term" value="F:tRNA pseudouridine(55) synthase activity"/>
    <property type="evidence" value="ECO:0007669"/>
    <property type="project" value="UniProtKB-EC"/>
</dbReference>
<dbReference type="GO" id="GO:1990481">
    <property type="term" value="P:mRNA pseudouridine synthesis"/>
    <property type="evidence" value="ECO:0007669"/>
    <property type="project" value="TreeGrafter"/>
</dbReference>
<dbReference type="GO" id="GO:0031119">
    <property type="term" value="P:tRNA pseudouridine synthesis"/>
    <property type="evidence" value="ECO:0007669"/>
    <property type="project" value="UniProtKB-UniRule"/>
</dbReference>
<dbReference type="Gene3D" id="3.30.2350.10">
    <property type="entry name" value="Pseudouridine synthase"/>
    <property type="match status" value="1"/>
</dbReference>
<dbReference type="HAMAP" id="MF_01080">
    <property type="entry name" value="TruB_bact"/>
    <property type="match status" value="1"/>
</dbReference>
<dbReference type="InterPro" id="IPR020103">
    <property type="entry name" value="PsdUridine_synth_cat_dom_sf"/>
</dbReference>
<dbReference type="InterPro" id="IPR002501">
    <property type="entry name" value="PsdUridine_synth_N"/>
</dbReference>
<dbReference type="InterPro" id="IPR014780">
    <property type="entry name" value="tRNA_psdUridine_synth_TruB"/>
</dbReference>
<dbReference type="NCBIfam" id="TIGR00431">
    <property type="entry name" value="TruB"/>
    <property type="match status" value="1"/>
</dbReference>
<dbReference type="PANTHER" id="PTHR13767:SF2">
    <property type="entry name" value="PSEUDOURIDYLATE SYNTHASE TRUB1"/>
    <property type="match status" value="1"/>
</dbReference>
<dbReference type="PANTHER" id="PTHR13767">
    <property type="entry name" value="TRNA-PSEUDOURIDINE SYNTHASE"/>
    <property type="match status" value="1"/>
</dbReference>
<dbReference type="Pfam" id="PF01509">
    <property type="entry name" value="TruB_N"/>
    <property type="match status" value="1"/>
</dbReference>
<dbReference type="SUPFAM" id="SSF55120">
    <property type="entry name" value="Pseudouridine synthase"/>
    <property type="match status" value="1"/>
</dbReference>
<keyword id="KW-0413">Isomerase</keyword>
<keyword id="KW-1185">Reference proteome</keyword>
<keyword id="KW-0819">tRNA processing</keyword>
<organism>
    <name type="scientific">Campylobacter jejuni subsp. jejuni serotype O:2 (strain ATCC 700819 / NCTC 11168)</name>
    <dbReference type="NCBI Taxonomy" id="192222"/>
    <lineage>
        <taxon>Bacteria</taxon>
        <taxon>Pseudomonadati</taxon>
        <taxon>Campylobacterota</taxon>
        <taxon>Epsilonproteobacteria</taxon>
        <taxon>Campylobacterales</taxon>
        <taxon>Campylobacteraceae</taxon>
        <taxon>Campylobacter</taxon>
    </lineage>
</organism>
<gene>
    <name evidence="1" type="primary">truB</name>
    <name type="ordered locus">Cj1102</name>
</gene>
<accession>Q9PNJ2</accession>
<accession>Q0P9F2</accession>
<reference key="1">
    <citation type="journal article" date="2000" name="Nature">
        <title>The genome sequence of the food-borne pathogen Campylobacter jejuni reveals hypervariable sequences.</title>
        <authorList>
            <person name="Parkhill J."/>
            <person name="Wren B.W."/>
            <person name="Mungall K.L."/>
            <person name="Ketley J.M."/>
            <person name="Churcher C.M."/>
            <person name="Basham D."/>
            <person name="Chillingworth T."/>
            <person name="Davies R.M."/>
            <person name="Feltwell T."/>
            <person name="Holroyd S."/>
            <person name="Jagels K."/>
            <person name="Karlyshev A.V."/>
            <person name="Moule S."/>
            <person name="Pallen M.J."/>
            <person name="Penn C.W."/>
            <person name="Quail M.A."/>
            <person name="Rajandream M.A."/>
            <person name="Rutherford K.M."/>
            <person name="van Vliet A.H.M."/>
            <person name="Whitehead S."/>
            <person name="Barrell B.G."/>
        </authorList>
    </citation>
    <scope>NUCLEOTIDE SEQUENCE [LARGE SCALE GENOMIC DNA]</scope>
    <source>
        <strain>ATCC 700819 / NCTC 11168</strain>
    </source>
</reference>
<sequence length="272" mass="31419">MNKIFAAFKPRGLSSNAFLSTLKKKYKNKKAGYSGTLDPFAKGVLIVAFGQYTKLFRFLKKTPKTYKATLWLGVYSLSLDDQNIKEIKNIKEFDLPNLQQIIDQMQGIISYTPPQFSAKRINGTRAYELAKKGIEVNLKPCQMEVFDCKILSYNHPFLNIEITVSEGAYIRSYCELFARKLGINATLSSLERIKEGKFVYNNEKSLNVLKYINLKPNFIKDLNKLENGAKIFVEELEFHDKGDYYIETEKYFSIINIKENTVKYLLNKVEKC</sequence>
<name>TRUB_CAMJE</name>
<comment type="function">
    <text evidence="1">Responsible for synthesis of pseudouridine from uracil-55 in the psi GC loop of transfer RNAs.</text>
</comment>
<comment type="catalytic activity">
    <reaction evidence="1">
        <text>uridine(55) in tRNA = pseudouridine(55) in tRNA</text>
        <dbReference type="Rhea" id="RHEA:42532"/>
        <dbReference type="Rhea" id="RHEA-COMP:10101"/>
        <dbReference type="Rhea" id="RHEA-COMP:10102"/>
        <dbReference type="ChEBI" id="CHEBI:65314"/>
        <dbReference type="ChEBI" id="CHEBI:65315"/>
        <dbReference type="EC" id="5.4.99.25"/>
    </reaction>
</comment>
<comment type="similarity">
    <text evidence="1">Belongs to the pseudouridine synthase TruB family. Type 1 subfamily.</text>
</comment>
<proteinExistence type="inferred from homology"/>